<feature type="chain" id="PRO_0000101128" description="Signal recognition particle receptor FtsY">
    <location>
        <begin position="1"/>
        <end position="378"/>
    </location>
</feature>
<feature type="binding site" evidence="1">
    <location>
        <begin position="184"/>
        <end position="191"/>
    </location>
    <ligand>
        <name>GTP</name>
        <dbReference type="ChEBI" id="CHEBI:37565"/>
    </ligand>
</feature>
<feature type="binding site" evidence="1">
    <location>
        <begin position="266"/>
        <end position="270"/>
    </location>
    <ligand>
        <name>GTP</name>
        <dbReference type="ChEBI" id="CHEBI:37565"/>
    </ligand>
</feature>
<feature type="binding site" evidence="1">
    <location>
        <begin position="330"/>
        <end position="333"/>
    </location>
    <ligand>
        <name>GTP</name>
        <dbReference type="ChEBI" id="CHEBI:37565"/>
    </ligand>
</feature>
<keyword id="KW-1003">Cell membrane</keyword>
<keyword id="KW-0963">Cytoplasm</keyword>
<keyword id="KW-0342">GTP-binding</keyword>
<keyword id="KW-0378">Hydrolase</keyword>
<keyword id="KW-0472">Membrane</keyword>
<keyword id="KW-0547">Nucleotide-binding</keyword>
<keyword id="KW-0675">Receptor</keyword>
<keyword id="KW-1185">Reference proteome</keyword>
<gene>
    <name evidence="1" type="primary">ftsY</name>
    <name type="ordered locus">BU024</name>
</gene>
<protein>
    <recommendedName>
        <fullName evidence="1">Signal recognition particle receptor FtsY</fullName>
        <shortName evidence="1">SRP receptor</shortName>
        <ecNumber evidence="1">3.6.5.4</ecNumber>
    </recommendedName>
</protein>
<comment type="function">
    <text evidence="1">Involved in targeting and insertion of nascent membrane proteins into the cytoplasmic membrane. Acts as a receptor for the complex formed by the signal recognition particle (SRP) and the ribosome-nascent chain (RNC). Interaction with SRP-RNC leads to the transfer of the RNC complex to the Sec translocase for insertion into the membrane, the hydrolysis of GTP by both Ffh and FtsY, and the dissociation of the SRP-FtsY complex into the individual components.</text>
</comment>
<comment type="catalytic activity">
    <reaction evidence="1">
        <text>GTP + H2O = GDP + phosphate + H(+)</text>
        <dbReference type="Rhea" id="RHEA:19669"/>
        <dbReference type="ChEBI" id="CHEBI:15377"/>
        <dbReference type="ChEBI" id="CHEBI:15378"/>
        <dbReference type="ChEBI" id="CHEBI:37565"/>
        <dbReference type="ChEBI" id="CHEBI:43474"/>
        <dbReference type="ChEBI" id="CHEBI:58189"/>
        <dbReference type="EC" id="3.6.5.4"/>
    </reaction>
</comment>
<comment type="subunit">
    <text evidence="1">Part of the signal recognition particle protein translocation system, which is composed of SRP and FtsY. SRP is a ribonucleoprotein composed of Ffh and a 4.5S RNA molecule.</text>
</comment>
<comment type="subcellular location">
    <subcellularLocation>
        <location>Cell membrane</location>
        <topology>Peripheral membrane protein</topology>
        <orientation>Cytoplasmic side</orientation>
    </subcellularLocation>
    <subcellularLocation>
        <location evidence="1">Cytoplasm</location>
    </subcellularLocation>
</comment>
<comment type="similarity">
    <text evidence="1">Belongs to the GTP-binding SRP family. FtsY subfamily.</text>
</comment>
<proteinExistence type="inferred from homology"/>
<dbReference type="EC" id="3.6.5.4" evidence="1"/>
<dbReference type="EMBL" id="BA000003">
    <property type="protein sequence ID" value="BAB12751.1"/>
    <property type="molecule type" value="Genomic_DNA"/>
</dbReference>
<dbReference type="RefSeq" id="NP_239865.1">
    <property type="nucleotide sequence ID" value="NC_002528.1"/>
</dbReference>
<dbReference type="RefSeq" id="WP_010895906.1">
    <property type="nucleotide sequence ID" value="NC_002528.1"/>
</dbReference>
<dbReference type="SMR" id="P57137"/>
<dbReference type="STRING" id="563178.BUAP5A_024"/>
<dbReference type="EnsemblBacteria" id="BAB12751">
    <property type="protein sequence ID" value="BAB12751"/>
    <property type="gene ID" value="BAB12751"/>
</dbReference>
<dbReference type="KEGG" id="buc:BU024"/>
<dbReference type="PATRIC" id="fig|107806.10.peg.36"/>
<dbReference type="eggNOG" id="COG0552">
    <property type="taxonomic scope" value="Bacteria"/>
</dbReference>
<dbReference type="HOGENOM" id="CLU_009301_3_0_6"/>
<dbReference type="Proteomes" id="UP000001806">
    <property type="component" value="Chromosome"/>
</dbReference>
<dbReference type="GO" id="GO:0005737">
    <property type="term" value="C:cytoplasm"/>
    <property type="evidence" value="ECO:0007669"/>
    <property type="project" value="UniProtKB-SubCell"/>
</dbReference>
<dbReference type="GO" id="GO:0005886">
    <property type="term" value="C:plasma membrane"/>
    <property type="evidence" value="ECO:0007669"/>
    <property type="project" value="UniProtKB-SubCell"/>
</dbReference>
<dbReference type="GO" id="GO:0016887">
    <property type="term" value="F:ATP hydrolysis activity"/>
    <property type="evidence" value="ECO:0007669"/>
    <property type="project" value="InterPro"/>
</dbReference>
<dbReference type="GO" id="GO:0005525">
    <property type="term" value="F:GTP binding"/>
    <property type="evidence" value="ECO:0007669"/>
    <property type="project" value="UniProtKB-UniRule"/>
</dbReference>
<dbReference type="GO" id="GO:0003924">
    <property type="term" value="F:GTPase activity"/>
    <property type="evidence" value="ECO:0007669"/>
    <property type="project" value="UniProtKB-UniRule"/>
</dbReference>
<dbReference type="GO" id="GO:0005047">
    <property type="term" value="F:signal recognition particle binding"/>
    <property type="evidence" value="ECO:0007669"/>
    <property type="project" value="TreeGrafter"/>
</dbReference>
<dbReference type="GO" id="GO:0006614">
    <property type="term" value="P:SRP-dependent cotranslational protein targeting to membrane"/>
    <property type="evidence" value="ECO:0007669"/>
    <property type="project" value="InterPro"/>
</dbReference>
<dbReference type="CDD" id="cd17874">
    <property type="entry name" value="FtsY"/>
    <property type="match status" value="1"/>
</dbReference>
<dbReference type="FunFam" id="1.20.120.140:FF:000002">
    <property type="entry name" value="Signal recognition particle receptor FtsY"/>
    <property type="match status" value="1"/>
</dbReference>
<dbReference type="FunFam" id="3.40.50.300:FF:000053">
    <property type="entry name" value="Signal recognition particle receptor FtsY"/>
    <property type="match status" value="1"/>
</dbReference>
<dbReference type="Gene3D" id="3.40.50.300">
    <property type="entry name" value="P-loop containing nucleotide triphosphate hydrolases"/>
    <property type="match status" value="1"/>
</dbReference>
<dbReference type="Gene3D" id="1.20.120.140">
    <property type="entry name" value="Signal recognition particle SRP54, nucleotide-binding domain"/>
    <property type="match status" value="1"/>
</dbReference>
<dbReference type="HAMAP" id="MF_00920">
    <property type="entry name" value="FtsY"/>
    <property type="match status" value="1"/>
</dbReference>
<dbReference type="InterPro" id="IPR003593">
    <property type="entry name" value="AAA+_ATPase"/>
</dbReference>
<dbReference type="InterPro" id="IPR027417">
    <property type="entry name" value="P-loop_NTPase"/>
</dbReference>
<dbReference type="InterPro" id="IPR013822">
    <property type="entry name" value="Signal_recog_particl_SRP54_hlx"/>
</dbReference>
<dbReference type="InterPro" id="IPR004390">
    <property type="entry name" value="SR_rcpt_FtsY"/>
</dbReference>
<dbReference type="InterPro" id="IPR036225">
    <property type="entry name" value="SRP/SRP_N"/>
</dbReference>
<dbReference type="InterPro" id="IPR000897">
    <property type="entry name" value="SRP54_GTPase_dom"/>
</dbReference>
<dbReference type="InterPro" id="IPR042101">
    <property type="entry name" value="SRP54_N_sf"/>
</dbReference>
<dbReference type="NCBIfam" id="TIGR00064">
    <property type="entry name" value="ftsY"/>
    <property type="match status" value="1"/>
</dbReference>
<dbReference type="PANTHER" id="PTHR43134">
    <property type="entry name" value="SIGNAL RECOGNITION PARTICLE RECEPTOR SUBUNIT ALPHA"/>
    <property type="match status" value="1"/>
</dbReference>
<dbReference type="PANTHER" id="PTHR43134:SF1">
    <property type="entry name" value="SIGNAL RECOGNITION PARTICLE RECEPTOR SUBUNIT ALPHA"/>
    <property type="match status" value="1"/>
</dbReference>
<dbReference type="Pfam" id="PF00448">
    <property type="entry name" value="SRP54"/>
    <property type="match status" value="1"/>
</dbReference>
<dbReference type="Pfam" id="PF02881">
    <property type="entry name" value="SRP54_N"/>
    <property type="match status" value="1"/>
</dbReference>
<dbReference type="SMART" id="SM00382">
    <property type="entry name" value="AAA"/>
    <property type="match status" value="1"/>
</dbReference>
<dbReference type="SMART" id="SM00962">
    <property type="entry name" value="SRP54"/>
    <property type="match status" value="1"/>
</dbReference>
<dbReference type="SMART" id="SM00963">
    <property type="entry name" value="SRP54_N"/>
    <property type="match status" value="1"/>
</dbReference>
<dbReference type="SUPFAM" id="SSF47364">
    <property type="entry name" value="Domain of the SRP/SRP receptor G-proteins"/>
    <property type="match status" value="1"/>
</dbReference>
<dbReference type="SUPFAM" id="SSF52540">
    <property type="entry name" value="P-loop containing nucleoside triphosphate hydrolases"/>
    <property type="match status" value="1"/>
</dbReference>
<dbReference type="PROSITE" id="PS00300">
    <property type="entry name" value="SRP54"/>
    <property type="match status" value="1"/>
</dbReference>
<accession>P57137</accession>
<reference key="1">
    <citation type="journal article" date="2000" name="Nature">
        <title>Genome sequence of the endocellular bacterial symbiont of aphids Buchnera sp. APS.</title>
        <authorList>
            <person name="Shigenobu S."/>
            <person name="Watanabe H."/>
            <person name="Hattori M."/>
            <person name="Sakaki Y."/>
            <person name="Ishikawa H."/>
        </authorList>
    </citation>
    <scope>NUCLEOTIDE SEQUENCE [LARGE SCALE GENOMIC DNA]</scope>
    <source>
        <strain>APS</strain>
    </source>
</reference>
<organism>
    <name type="scientific">Buchnera aphidicola subsp. Acyrthosiphon pisum (strain APS)</name>
    <name type="common">Acyrthosiphon pisum symbiotic bacterium</name>
    <dbReference type="NCBI Taxonomy" id="107806"/>
    <lineage>
        <taxon>Bacteria</taxon>
        <taxon>Pseudomonadati</taxon>
        <taxon>Pseudomonadota</taxon>
        <taxon>Gammaproteobacteria</taxon>
        <taxon>Enterobacterales</taxon>
        <taxon>Erwiniaceae</taxon>
        <taxon>Buchnera</taxon>
    </lineage>
</organism>
<name>FTSY_BUCAI</name>
<sequence>MKDSKKNGFFSWLSSKIKKKKTIDIRQNNTDKNHDINHEDLYTKKDLLIKQDNPKKDEIDTLNDHGKDIEKAQNTKNNFFLRLKKSLKTTKKNLGDKIYQIFLSKKIDEVLFEELEEKMLLADIGINTTNRIISNLIKDVNREDLKNSEKLYFLLKRKMFNILKKVEIPLEISSHSPFVILVVGVNGTGKTTTVAKLAEKYKLEGKSIMLAAADTFRAAGIEQLQTLGKLNNIPVIAQRSGSDPAAVIFDAVKSAKSKKIDVLIIDTAGRLHNKLHLIEELKKIVRVIKKIDISAPHEKLLIIDSCNGQNTIQQTEIFHKALNLTGIIITKLDGTAKGGVVFSLADQFQIPIRYIGIGEKMQDLGHFNSQEFIESIFT</sequence>
<evidence type="ECO:0000255" key="1">
    <source>
        <dbReference type="HAMAP-Rule" id="MF_00920"/>
    </source>
</evidence>